<accession>B9KY71</accession>
<protein>
    <recommendedName>
        <fullName evidence="1">4-hydroxy-tetrahydrodipicolinate synthase</fullName>
        <shortName evidence="1">HTPA synthase</shortName>
        <ecNumber evidence="1">4.3.3.7</ecNumber>
    </recommendedName>
</protein>
<comment type="function">
    <text evidence="1">Catalyzes the condensation of (S)-aspartate-beta-semialdehyde [(S)-ASA] and pyruvate to 4-hydroxy-tetrahydrodipicolinate (HTPA).</text>
</comment>
<comment type="catalytic activity">
    <reaction evidence="1">
        <text>L-aspartate 4-semialdehyde + pyruvate = (2S,4S)-4-hydroxy-2,3,4,5-tetrahydrodipicolinate + H2O + H(+)</text>
        <dbReference type="Rhea" id="RHEA:34171"/>
        <dbReference type="ChEBI" id="CHEBI:15361"/>
        <dbReference type="ChEBI" id="CHEBI:15377"/>
        <dbReference type="ChEBI" id="CHEBI:15378"/>
        <dbReference type="ChEBI" id="CHEBI:67139"/>
        <dbReference type="ChEBI" id="CHEBI:537519"/>
        <dbReference type="EC" id="4.3.3.7"/>
    </reaction>
</comment>
<comment type="pathway">
    <text evidence="1">Amino-acid biosynthesis; L-lysine biosynthesis via DAP pathway; (S)-tetrahydrodipicolinate from L-aspartate: step 3/4.</text>
</comment>
<comment type="subunit">
    <text evidence="1">Homotetramer; dimer of dimers.</text>
</comment>
<comment type="subcellular location">
    <subcellularLocation>
        <location evidence="1">Cytoplasm</location>
    </subcellularLocation>
</comment>
<comment type="similarity">
    <text evidence="1">Belongs to the DapA family.</text>
</comment>
<comment type="caution">
    <text evidence="2">Was originally thought to be a dihydrodipicolinate synthase (DHDPS), catalyzing the condensation of (S)-aspartate-beta-semialdehyde [(S)-ASA] and pyruvate to dihydrodipicolinate (DHDP). However, it was shown in E.coli that the product of the enzymatic reaction is not dihydrodipicolinate but in fact (4S)-4-hydroxy-2,3,4,5-tetrahydro-(2S)-dipicolinic acid (HTPA), and that the consecutive dehydration reaction leading to DHDP is not spontaneous but catalyzed by DapB.</text>
</comment>
<gene>
    <name evidence="1" type="primary">dapA</name>
    <name type="ordered locus">trd_0414</name>
</gene>
<proteinExistence type="inferred from homology"/>
<reference key="1">
    <citation type="journal article" date="2009" name="PLoS ONE">
        <title>Complete genome sequence of the aerobic CO-oxidizing thermophile Thermomicrobium roseum.</title>
        <authorList>
            <person name="Wu D."/>
            <person name="Raymond J."/>
            <person name="Wu M."/>
            <person name="Chatterji S."/>
            <person name="Ren Q."/>
            <person name="Graham J.E."/>
            <person name="Bryant D.A."/>
            <person name="Robb F."/>
            <person name="Colman A."/>
            <person name="Tallon L.J."/>
            <person name="Badger J.H."/>
            <person name="Madupu R."/>
            <person name="Ward N.L."/>
            <person name="Eisen J.A."/>
        </authorList>
    </citation>
    <scope>NUCLEOTIDE SEQUENCE [LARGE SCALE GENOMIC DNA]</scope>
    <source>
        <strain>ATCC 27502 / DSM 5159 / P-2</strain>
    </source>
</reference>
<evidence type="ECO:0000255" key="1">
    <source>
        <dbReference type="HAMAP-Rule" id="MF_00418"/>
    </source>
</evidence>
<evidence type="ECO:0000305" key="2"/>
<sequence>MLRGTFVALITPFAGEEIDEPRLRDLVDWLIANRVDGLVPCGTTGETPSLSDTEWQRVAAVVIEQAAGRVPVIVGTGTNSTMVTIQRTRVARELGATAAMVVTPYYNKPQQDGLYRHVAAIADAVDLPLVIYNVPSRTGVNLAPETARRLLDIAPVIAFKDSSGSLDQVSELVLAVGDRSSVLSGDDSLTLPIIAVGGQGVVSVLANIAPAATATMVRAALDGDLARARQLHGELFPLARALFIETNPVPVKTAAELLGLCSATVRLPLAPLAPANRERLLAALASCPHTASLLARPMGEAA</sequence>
<organism>
    <name type="scientific">Thermomicrobium roseum (strain ATCC 27502 / DSM 5159 / P-2)</name>
    <dbReference type="NCBI Taxonomy" id="309801"/>
    <lineage>
        <taxon>Bacteria</taxon>
        <taxon>Pseudomonadati</taxon>
        <taxon>Thermomicrobiota</taxon>
        <taxon>Thermomicrobia</taxon>
        <taxon>Thermomicrobiales</taxon>
        <taxon>Thermomicrobiaceae</taxon>
        <taxon>Thermomicrobium</taxon>
    </lineage>
</organism>
<feature type="chain" id="PRO_1000134885" description="4-hydroxy-tetrahydrodipicolinate synthase">
    <location>
        <begin position="1"/>
        <end position="302"/>
    </location>
</feature>
<feature type="active site" description="Proton donor/acceptor" evidence="1">
    <location>
        <position position="132"/>
    </location>
</feature>
<feature type="active site" description="Schiff-base intermediate with substrate" evidence="1">
    <location>
        <position position="160"/>
    </location>
</feature>
<feature type="binding site" evidence="1">
    <location>
        <position position="44"/>
    </location>
    <ligand>
        <name>pyruvate</name>
        <dbReference type="ChEBI" id="CHEBI:15361"/>
    </ligand>
</feature>
<feature type="binding site" evidence="1">
    <location>
        <position position="202"/>
    </location>
    <ligand>
        <name>pyruvate</name>
        <dbReference type="ChEBI" id="CHEBI:15361"/>
    </ligand>
</feature>
<feature type="site" description="Part of a proton relay during catalysis" evidence="1">
    <location>
        <position position="43"/>
    </location>
</feature>
<feature type="site" description="Part of a proton relay during catalysis" evidence="1">
    <location>
        <position position="106"/>
    </location>
</feature>
<name>DAPA_THERP</name>
<keyword id="KW-0028">Amino-acid biosynthesis</keyword>
<keyword id="KW-0963">Cytoplasm</keyword>
<keyword id="KW-0220">Diaminopimelate biosynthesis</keyword>
<keyword id="KW-0456">Lyase</keyword>
<keyword id="KW-0457">Lysine biosynthesis</keyword>
<keyword id="KW-1185">Reference proteome</keyword>
<keyword id="KW-0704">Schiff base</keyword>
<dbReference type="EC" id="4.3.3.7" evidence="1"/>
<dbReference type="EMBL" id="CP001275">
    <property type="protein sequence ID" value="ACM05517.1"/>
    <property type="molecule type" value="Genomic_DNA"/>
</dbReference>
<dbReference type="RefSeq" id="WP_012641821.1">
    <property type="nucleotide sequence ID" value="NC_011959.1"/>
</dbReference>
<dbReference type="SMR" id="B9KY71"/>
<dbReference type="STRING" id="309801.trd_0414"/>
<dbReference type="KEGG" id="tro:trd_0414"/>
<dbReference type="eggNOG" id="COG0329">
    <property type="taxonomic scope" value="Bacteria"/>
</dbReference>
<dbReference type="HOGENOM" id="CLU_049343_7_1_0"/>
<dbReference type="OrthoDB" id="9782828at2"/>
<dbReference type="UniPathway" id="UPA00034">
    <property type="reaction ID" value="UER00017"/>
</dbReference>
<dbReference type="Proteomes" id="UP000000447">
    <property type="component" value="Chromosome"/>
</dbReference>
<dbReference type="GO" id="GO:0005829">
    <property type="term" value="C:cytosol"/>
    <property type="evidence" value="ECO:0007669"/>
    <property type="project" value="TreeGrafter"/>
</dbReference>
<dbReference type="GO" id="GO:0008840">
    <property type="term" value="F:4-hydroxy-tetrahydrodipicolinate synthase activity"/>
    <property type="evidence" value="ECO:0007669"/>
    <property type="project" value="UniProtKB-UniRule"/>
</dbReference>
<dbReference type="GO" id="GO:0019877">
    <property type="term" value="P:diaminopimelate biosynthetic process"/>
    <property type="evidence" value="ECO:0007669"/>
    <property type="project" value="UniProtKB-UniRule"/>
</dbReference>
<dbReference type="GO" id="GO:0009089">
    <property type="term" value="P:lysine biosynthetic process via diaminopimelate"/>
    <property type="evidence" value="ECO:0007669"/>
    <property type="project" value="UniProtKB-UniRule"/>
</dbReference>
<dbReference type="CDD" id="cd00950">
    <property type="entry name" value="DHDPS"/>
    <property type="match status" value="1"/>
</dbReference>
<dbReference type="Gene3D" id="3.20.20.70">
    <property type="entry name" value="Aldolase class I"/>
    <property type="match status" value="1"/>
</dbReference>
<dbReference type="HAMAP" id="MF_00418">
    <property type="entry name" value="DapA"/>
    <property type="match status" value="1"/>
</dbReference>
<dbReference type="InterPro" id="IPR013785">
    <property type="entry name" value="Aldolase_TIM"/>
</dbReference>
<dbReference type="InterPro" id="IPR005263">
    <property type="entry name" value="DapA"/>
</dbReference>
<dbReference type="InterPro" id="IPR002220">
    <property type="entry name" value="DapA-like"/>
</dbReference>
<dbReference type="InterPro" id="IPR020625">
    <property type="entry name" value="Schiff_base-form_aldolases_AS"/>
</dbReference>
<dbReference type="NCBIfam" id="TIGR00674">
    <property type="entry name" value="dapA"/>
    <property type="match status" value="1"/>
</dbReference>
<dbReference type="PANTHER" id="PTHR12128:SF66">
    <property type="entry name" value="4-HYDROXY-2-OXOGLUTARATE ALDOLASE, MITOCHONDRIAL"/>
    <property type="match status" value="1"/>
</dbReference>
<dbReference type="PANTHER" id="PTHR12128">
    <property type="entry name" value="DIHYDRODIPICOLINATE SYNTHASE"/>
    <property type="match status" value="1"/>
</dbReference>
<dbReference type="Pfam" id="PF00701">
    <property type="entry name" value="DHDPS"/>
    <property type="match status" value="1"/>
</dbReference>
<dbReference type="PIRSF" id="PIRSF001365">
    <property type="entry name" value="DHDPS"/>
    <property type="match status" value="1"/>
</dbReference>
<dbReference type="PRINTS" id="PR00146">
    <property type="entry name" value="DHPICSNTHASE"/>
</dbReference>
<dbReference type="SMART" id="SM01130">
    <property type="entry name" value="DHDPS"/>
    <property type="match status" value="1"/>
</dbReference>
<dbReference type="SUPFAM" id="SSF51569">
    <property type="entry name" value="Aldolase"/>
    <property type="match status" value="1"/>
</dbReference>
<dbReference type="PROSITE" id="PS00666">
    <property type="entry name" value="DHDPS_2"/>
    <property type="match status" value="1"/>
</dbReference>